<comment type="function">
    <text evidence="1">Catalyzes the cyclization of GTP to (8S)-3',8-cyclo-7,8-dihydroguanosine 5'-triphosphate.</text>
</comment>
<comment type="catalytic activity">
    <reaction evidence="1">
        <text>GTP + AH2 + S-adenosyl-L-methionine = (8S)-3',8-cyclo-7,8-dihydroguanosine 5'-triphosphate + 5'-deoxyadenosine + L-methionine + A + H(+)</text>
        <dbReference type="Rhea" id="RHEA:49576"/>
        <dbReference type="ChEBI" id="CHEBI:13193"/>
        <dbReference type="ChEBI" id="CHEBI:15378"/>
        <dbReference type="ChEBI" id="CHEBI:17319"/>
        <dbReference type="ChEBI" id="CHEBI:17499"/>
        <dbReference type="ChEBI" id="CHEBI:37565"/>
        <dbReference type="ChEBI" id="CHEBI:57844"/>
        <dbReference type="ChEBI" id="CHEBI:59789"/>
        <dbReference type="ChEBI" id="CHEBI:131766"/>
        <dbReference type="EC" id="4.1.99.22"/>
    </reaction>
</comment>
<comment type="cofactor">
    <cofactor evidence="1">
        <name>[4Fe-4S] cluster</name>
        <dbReference type="ChEBI" id="CHEBI:49883"/>
    </cofactor>
    <text evidence="1">Binds 2 [4Fe-4S] clusters. Binds 1 [4Fe-4S] cluster coordinated with 3 cysteines and an exchangeable S-adenosyl-L-methionine and 1 [4Fe-4S] cluster coordinated with 3 cysteines and the GTP-derived substrate.</text>
</comment>
<comment type="pathway">
    <text evidence="1">Cofactor biosynthesis; molybdopterin biosynthesis.</text>
</comment>
<comment type="similarity">
    <text evidence="1">Belongs to the radical SAM superfamily. MoaA family.</text>
</comment>
<reference key="1">
    <citation type="journal article" date="2001" name="Proc. Natl. Acad. Sci. U.S.A.">
        <title>The complete genome of the crenarchaeon Sulfolobus solfataricus P2.</title>
        <authorList>
            <person name="She Q."/>
            <person name="Singh R.K."/>
            <person name="Confalonieri F."/>
            <person name="Zivanovic Y."/>
            <person name="Allard G."/>
            <person name="Awayez M.J."/>
            <person name="Chan-Weiher C.C.-Y."/>
            <person name="Clausen I.G."/>
            <person name="Curtis B.A."/>
            <person name="De Moors A."/>
            <person name="Erauso G."/>
            <person name="Fletcher C."/>
            <person name="Gordon P.M.K."/>
            <person name="Heikamp-de Jong I."/>
            <person name="Jeffries A.C."/>
            <person name="Kozera C.J."/>
            <person name="Medina N."/>
            <person name="Peng X."/>
            <person name="Thi-Ngoc H.P."/>
            <person name="Redder P."/>
            <person name="Schenk M.E."/>
            <person name="Theriault C."/>
            <person name="Tolstrup N."/>
            <person name="Charlebois R.L."/>
            <person name="Doolittle W.F."/>
            <person name="Duguet M."/>
            <person name="Gaasterland T."/>
            <person name="Garrett R.A."/>
            <person name="Ragan M.A."/>
            <person name="Sensen C.W."/>
            <person name="Van der Oost J."/>
        </authorList>
    </citation>
    <scope>NUCLEOTIDE SEQUENCE [LARGE SCALE GENOMIC DNA]</scope>
    <source>
        <strain>ATCC 35092 / DSM 1617 / JCM 11322 / P2</strain>
    </source>
</reference>
<dbReference type="EC" id="4.1.99.22" evidence="1"/>
<dbReference type="EMBL" id="AE006641">
    <property type="protein sequence ID" value="AAK40692.1"/>
    <property type="molecule type" value="Genomic_DNA"/>
</dbReference>
<dbReference type="PIR" id="E90179">
    <property type="entry name" value="E90179"/>
</dbReference>
<dbReference type="RefSeq" id="WP_009990662.1">
    <property type="nucleotide sequence ID" value="NC_002754.1"/>
</dbReference>
<dbReference type="SMR" id="Q980F0"/>
<dbReference type="FunCoup" id="Q980F0">
    <property type="interactions" value="203"/>
</dbReference>
<dbReference type="STRING" id="273057.SSO0362"/>
<dbReference type="PaxDb" id="273057-SSO0362"/>
<dbReference type="EnsemblBacteria" id="AAK40692">
    <property type="protein sequence ID" value="AAK40692"/>
    <property type="gene ID" value="SSO0362"/>
</dbReference>
<dbReference type="GeneID" id="44129336"/>
<dbReference type="KEGG" id="sso:SSO0362"/>
<dbReference type="PATRIC" id="fig|273057.12.peg.356"/>
<dbReference type="eggNOG" id="arCOG00930">
    <property type="taxonomic scope" value="Archaea"/>
</dbReference>
<dbReference type="HOGENOM" id="CLU_009273_0_1_2"/>
<dbReference type="InParanoid" id="Q980F0"/>
<dbReference type="PhylomeDB" id="Q980F0"/>
<dbReference type="UniPathway" id="UPA00344"/>
<dbReference type="Proteomes" id="UP000001974">
    <property type="component" value="Chromosome"/>
</dbReference>
<dbReference type="GO" id="GO:0051539">
    <property type="term" value="F:4 iron, 4 sulfur cluster binding"/>
    <property type="evidence" value="ECO:0007669"/>
    <property type="project" value="UniProtKB-UniRule"/>
</dbReference>
<dbReference type="GO" id="GO:0061799">
    <property type="term" value="F:cyclic pyranopterin monophosphate synthase activity"/>
    <property type="evidence" value="ECO:0000318"/>
    <property type="project" value="GO_Central"/>
</dbReference>
<dbReference type="GO" id="GO:0061798">
    <property type="term" value="F:GTP 3',8'-cyclase activity"/>
    <property type="evidence" value="ECO:0000318"/>
    <property type="project" value="GO_Central"/>
</dbReference>
<dbReference type="GO" id="GO:0005525">
    <property type="term" value="F:GTP binding"/>
    <property type="evidence" value="ECO:0007669"/>
    <property type="project" value="UniProtKB-UniRule"/>
</dbReference>
<dbReference type="GO" id="GO:0046872">
    <property type="term" value="F:metal ion binding"/>
    <property type="evidence" value="ECO:0007669"/>
    <property type="project" value="UniProtKB-KW"/>
</dbReference>
<dbReference type="GO" id="GO:1904047">
    <property type="term" value="F:S-adenosyl-L-methionine binding"/>
    <property type="evidence" value="ECO:0007669"/>
    <property type="project" value="UniProtKB-UniRule"/>
</dbReference>
<dbReference type="GO" id="GO:0006777">
    <property type="term" value="P:Mo-molybdopterin cofactor biosynthetic process"/>
    <property type="evidence" value="ECO:0000318"/>
    <property type="project" value="GO_Central"/>
</dbReference>
<dbReference type="CDD" id="cd01335">
    <property type="entry name" value="Radical_SAM"/>
    <property type="match status" value="1"/>
</dbReference>
<dbReference type="CDD" id="cd21117">
    <property type="entry name" value="Twitch_MoaA"/>
    <property type="match status" value="1"/>
</dbReference>
<dbReference type="Gene3D" id="3.20.20.70">
    <property type="entry name" value="Aldolase class I"/>
    <property type="match status" value="1"/>
</dbReference>
<dbReference type="HAMAP" id="MF_01225_A">
    <property type="entry name" value="MoaA_A"/>
    <property type="match status" value="1"/>
</dbReference>
<dbReference type="InterPro" id="IPR013785">
    <property type="entry name" value="Aldolase_TIM"/>
</dbReference>
<dbReference type="InterPro" id="IPR006638">
    <property type="entry name" value="Elp3/MiaA/NifB-like_rSAM"/>
</dbReference>
<dbReference type="InterPro" id="IPR013485">
    <property type="entry name" value="MoaA_arc"/>
</dbReference>
<dbReference type="InterPro" id="IPR010505">
    <property type="entry name" value="MoaA_twitch"/>
</dbReference>
<dbReference type="InterPro" id="IPR050105">
    <property type="entry name" value="MoCo_biosynth_MoaA/MoaC"/>
</dbReference>
<dbReference type="InterPro" id="IPR007197">
    <property type="entry name" value="rSAM"/>
</dbReference>
<dbReference type="NCBIfam" id="TIGR02668">
    <property type="entry name" value="moaA_archaeal"/>
    <property type="match status" value="1"/>
</dbReference>
<dbReference type="NCBIfam" id="NF001199">
    <property type="entry name" value="PRK00164.2-1"/>
    <property type="match status" value="1"/>
</dbReference>
<dbReference type="PANTHER" id="PTHR22960:SF0">
    <property type="entry name" value="MOLYBDENUM COFACTOR BIOSYNTHESIS PROTEIN 1"/>
    <property type="match status" value="1"/>
</dbReference>
<dbReference type="PANTHER" id="PTHR22960">
    <property type="entry name" value="MOLYBDOPTERIN COFACTOR SYNTHESIS PROTEIN A"/>
    <property type="match status" value="1"/>
</dbReference>
<dbReference type="Pfam" id="PF06463">
    <property type="entry name" value="Mob_synth_C"/>
    <property type="match status" value="1"/>
</dbReference>
<dbReference type="Pfam" id="PF04055">
    <property type="entry name" value="Radical_SAM"/>
    <property type="match status" value="1"/>
</dbReference>
<dbReference type="SFLD" id="SFLDG01383">
    <property type="entry name" value="cyclic_pyranopterin_phosphate"/>
    <property type="match status" value="1"/>
</dbReference>
<dbReference type="SFLD" id="SFLDS00029">
    <property type="entry name" value="Radical_SAM"/>
    <property type="match status" value="1"/>
</dbReference>
<dbReference type="SMART" id="SM00729">
    <property type="entry name" value="Elp3"/>
    <property type="match status" value="1"/>
</dbReference>
<dbReference type="SUPFAM" id="SSF102114">
    <property type="entry name" value="Radical SAM enzymes"/>
    <property type="match status" value="1"/>
</dbReference>
<dbReference type="PROSITE" id="PS51918">
    <property type="entry name" value="RADICAL_SAM"/>
    <property type="match status" value="1"/>
</dbReference>
<proteinExistence type="inferred from homology"/>
<keyword id="KW-0004">4Fe-4S</keyword>
<keyword id="KW-0342">GTP-binding</keyword>
<keyword id="KW-0408">Iron</keyword>
<keyword id="KW-0411">Iron-sulfur</keyword>
<keyword id="KW-0456">Lyase</keyword>
<keyword id="KW-0479">Metal-binding</keyword>
<keyword id="KW-0501">Molybdenum cofactor biosynthesis</keyword>
<keyword id="KW-0547">Nucleotide-binding</keyword>
<keyword id="KW-1185">Reference proteome</keyword>
<keyword id="KW-0949">S-adenosyl-L-methionine</keyword>
<gene>
    <name evidence="1" type="primary">moaA</name>
    <name type="ordered locus">SSO0362</name>
</gene>
<accession>Q980F0</accession>
<organism>
    <name type="scientific">Saccharolobus solfataricus (strain ATCC 35092 / DSM 1617 / JCM 11322 / P2)</name>
    <name type="common">Sulfolobus solfataricus</name>
    <dbReference type="NCBI Taxonomy" id="273057"/>
    <lineage>
        <taxon>Archaea</taxon>
        <taxon>Thermoproteota</taxon>
        <taxon>Thermoprotei</taxon>
        <taxon>Sulfolobales</taxon>
        <taxon>Sulfolobaceae</taxon>
        <taxon>Saccharolobus</taxon>
    </lineage>
</organism>
<feature type="chain" id="PRO_0000153028" description="Probable GTP 3',8-cyclase">
    <location>
        <begin position="1"/>
        <end position="308"/>
    </location>
</feature>
<feature type="domain" description="Radical SAM core" evidence="2">
    <location>
        <begin position="4"/>
        <end position="222"/>
    </location>
</feature>
<feature type="binding site" evidence="1">
    <location>
        <position position="13"/>
    </location>
    <ligand>
        <name>GTP</name>
        <dbReference type="ChEBI" id="CHEBI:37565"/>
    </ligand>
</feature>
<feature type="binding site" evidence="1">
    <location>
        <position position="20"/>
    </location>
    <ligand>
        <name>[4Fe-4S] cluster</name>
        <dbReference type="ChEBI" id="CHEBI:49883"/>
        <label>1</label>
        <note>4Fe-4S-S-AdoMet</note>
    </ligand>
</feature>
<feature type="binding site" evidence="1">
    <location>
        <position position="24"/>
    </location>
    <ligand>
        <name>[4Fe-4S] cluster</name>
        <dbReference type="ChEBI" id="CHEBI:49883"/>
        <label>1</label>
        <note>4Fe-4S-S-AdoMet</note>
    </ligand>
</feature>
<feature type="binding site" evidence="1">
    <location>
        <position position="27"/>
    </location>
    <ligand>
        <name>[4Fe-4S] cluster</name>
        <dbReference type="ChEBI" id="CHEBI:49883"/>
        <label>1</label>
        <note>4Fe-4S-S-AdoMet</note>
    </ligand>
</feature>
<feature type="binding site" evidence="1">
    <location>
        <position position="60"/>
    </location>
    <ligand>
        <name>GTP</name>
        <dbReference type="ChEBI" id="CHEBI:37565"/>
    </ligand>
</feature>
<feature type="binding site" evidence="1">
    <location>
        <position position="64"/>
    </location>
    <ligand>
        <name>S-adenosyl-L-methionine</name>
        <dbReference type="ChEBI" id="CHEBI:59789"/>
    </ligand>
</feature>
<feature type="binding site" evidence="1">
    <location>
        <position position="90"/>
    </location>
    <ligand>
        <name>GTP</name>
        <dbReference type="ChEBI" id="CHEBI:37565"/>
    </ligand>
</feature>
<feature type="binding site" evidence="1">
    <location>
        <position position="114"/>
    </location>
    <ligand>
        <name>S-adenosyl-L-methionine</name>
        <dbReference type="ChEBI" id="CHEBI:59789"/>
    </ligand>
</feature>
<feature type="binding site" evidence="1">
    <location>
        <position position="151"/>
    </location>
    <ligand>
        <name>GTP</name>
        <dbReference type="ChEBI" id="CHEBI:37565"/>
    </ligand>
</feature>
<feature type="binding site" evidence="1">
    <location>
        <position position="245"/>
    </location>
    <ligand>
        <name>[4Fe-4S] cluster</name>
        <dbReference type="ChEBI" id="CHEBI:49883"/>
        <label>2</label>
        <note>4Fe-4S-substrate</note>
    </ligand>
</feature>
<feature type="binding site" evidence="1">
    <location>
        <position position="248"/>
    </location>
    <ligand>
        <name>[4Fe-4S] cluster</name>
        <dbReference type="ChEBI" id="CHEBI:49883"/>
        <label>2</label>
        <note>4Fe-4S-substrate</note>
    </ligand>
</feature>
<feature type="binding site" evidence="1">
    <location>
        <begin position="250"/>
        <end position="252"/>
    </location>
    <ligand>
        <name>GTP</name>
        <dbReference type="ChEBI" id="CHEBI:37565"/>
    </ligand>
</feature>
<feature type="binding site" evidence="1">
    <location>
        <position position="262"/>
    </location>
    <ligand>
        <name>[4Fe-4S] cluster</name>
        <dbReference type="ChEBI" id="CHEBI:49883"/>
        <label>2</label>
        <note>4Fe-4S-substrate</note>
    </ligand>
</feature>
<evidence type="ECO:0000255" key="1">
    <source>
        <dbReference type="HAMAP-Rule" id="MF_01225"/>
    </source>
</evidence>
<evidence type="ECO:0000255" key="2">
    <source>
        <dbReference type="PROSITE-ProRule" id="PRU01266"/>
    </source>
</evidence>
<protein>
    <recommendedName>
        <fullName evidence="1">Probable GTP 3',8-cyclase</fullName>
        <ecNumber evidence="1">4.1.99.22</ecNumber>
    </recommendedName>
    <alternativeName>
        <fullName evidence="1">Molybdenum cofactor biosynthesis protein A</fullName>
    </alternativeName>
</protein>
<name>MOAA_SACS2</name>
<sequence>MIDRFGRPLEDLRITLTHACNFECFFCHMEGEEGDNYLLSKEDILLVAKVARKFGINSVKLTGGEPTLRRDLVEIVRGLKQLGYEDVSMTTNGFLLKDLAHKLKLAGLDRINISLHAVSRDTFKKITGVDAFDRVIEGIKSAIDVGLVPVKLNFVVNRRNREEAFKFIELSQNLGVNEIHLIELHPVGLGKLAFKEHDDLREIEEYIEKISIKKLIRKKHFRPRYVLPSGLIVEVVKPYANPIFCAGCNRIRLSVDGKLKTCLYREDNVIDVLDILKGEYSEDVKEELLGRAFMIAIAIREPNFKYKI</sequence>